<organism>
    <name type="scientific">Homo sapiens</name>
    <name type="common">Human</name>
    <dbReference type="NCBI Taxonomy" id="9606"/>
    <lineage>
        <taxon>Eukaryota</taxon>
        <taxon>Metazoa</taxon>
        <taxon>Chordata</taxon>
        <taxon>Craniata</taxon>
        <taxon>Vertebrata</taxon>
        <taxon>Euteleostomi</taxon>
        <taxon>Mammalia</taxon>
        <taxon>Eutheria</taxon>
        <taxon>Euarchontoglires</taxon>
        <taxon>Primates</taxon>
        <taxon>Haplorrhini</taxon>
        <taxon>Catarrhini</taxon>
        <taxon>Hominidae</taxon>
        <taxon>Homo</taxon>
    </lineage>
</organism>
<protein>
    <recommendedName>
        <fullName evidence="27">DNA repair protein XRCC1</fullName>
    </recommendedName>
    <alternativeName>
        <fullName>X-ray repair cross-complementing protein 1</fullName>
    </alternativeName>
</protein>
<accession>P18887</accession>
<accession>Q6IBS4</accession>
<accession>Q9HCB1</accession>
<evidence type="ECO:0000255" key="1">
    <source>
        <dbReference type="PROSITE-ProRule" id="PRU00033"/>
    </source>
</evidence>
<evidence type="ECO:0000256" key="2">
    <source>
        <dbReference type="SAM" id="MobiDB-lite"/>
    </source>
</evidence>
<evidence type="ECO:0000269" key="3">
    <source>
    </source>
</evidence>
<evidence type="ECO:0000269" key="4">
    <source>
    </source>
</evidence>
<evidence type="ECO:0000269" key="5">
    <source>
    </source>
</evidence>
<evidence type="ECO:0000269" key="6">
    <source>
    </source>
</evidence>
<evidence type="ECO:0000269" key="7">
    <source>
    </source>
</evidence>
<evidence type="ECO:0000269" key="8">
    <source>
    </source>
</evidence>
<evidence type="ECO:0000269" key="9">
    <source>
    </source>
</evidence>
<evidence type="ECO:0000269" key="10">
    <source>
    </source>
</evidence>
<evidence type="ECO:0000269" key="11">
    <source>
    </source>
</evidence>
<evidence type="ECO:0000269" key="12">
    <source>
    </source>
</evidence>
<evidence type="ECO:0000269" key="13">
    <source>
    </source>
</evidence>
<evidence type="ECO:0000269" key="14">
    <source>
    </source>
</evidence>
<evidence type="ECO:0000269" key="15">
    <source>
    </source>
</evidence>
<evidence type="ECO:0000269" key="16">
    <source>
    </source>
</evidence>
<evidence type="ECO:0000269" key="17">
    <source>
    </source>
</evidence>
<evidence type="ECO:0000269" key="18">
    <source>
    </source>
</evidence>
<evidence type="ECO:0000269" key="19">
    <source>
    </source>
</evidence>
<evidence type="ECO:0000269" key="20">
    <source>
    </source>
</evidence>
<evidence type="ECO:0000269" key="21">
    <source>
    </source>
</evidence>
<evidence type="ECO:0000269" key="22">
    <source>
    </source>
</evidence>
<evidence type="ECO:0000269" key="23">
    <source>
    </source>
</evidence>
<evidence type="ECO:0000269" key="24">
    <source>
    </source>
</evidence>
<evidence type="ECO:0000269" key="25">
    <source ref="2"/>
</evidence>
<evidence type="ECO:0000303" key="26">
    <source>
    </source>
</evidence>
<evidence type="ECO:0000305" key="27"/>
<evidence type="ECO:0000312" key="28">
    <source>
        <dbReference type="HGNC" id="HGNC:12828"/>
    </source>
</evidence>
<evidence type="ECO:0007744" key="29">
    <source>
    </source>
</evidence>
<evidence type="ECO:0007744" key="30">
    <source>
    </source>
</evidence>
<evidence type="ECO:0007744" key="31">
    <source>
    </source>
</evidence>
<evidence type="ECO:0007744" key="32">
    <source>
    </source>
</evidence>
<evidence type="ECO:0007744" key="33">
    <source>
    </source>
</evidence>
<evidence type="ECO:0007744" key="34">
    <source>
    </source>
</evidence>
<evidence type="ECO:0007744" key="35">
    <source>
    </source>
</evidence>
<evidence type="ECO:0007744" key="36">
    <source>
    </source>
</evidence>
<evidence type="ECO:0007744" key="37">
    <source>
    </source>
</evidence>
<evidence type="ECO:0007744" key="38">
    <source>
    </source>
</evidence>
<evidence type="ECO:0007744" key="39">
    <source>
    </source>
</evidence>
<evidence type="ECO:0007829" key="40">
    <source>
        <dbReference type="PDB" id="1XNA"/>
    </source>
</evidence>
<evidence type="ECO:0007829" key="41">
    <source>
        <dbReference type="PDB" id="2D8M"/>
    </source>
</evidence>
<evidence type="ECO:0007829" key="42">
    <source>
        <dbReference type="PDB" id="3K75"/>
    </source>
</evidence>
<evidence type="ECO:0007829" key="43">
    <source>
        <dbReference type="PDB" id="3LQC"/>
    </source>
</evidence>
<evidence type="ECO:0007829" key="44">
    <source>
        <dbReference type="PDB" id="6WH1"/>
    </source>
</evidence>
<dbReference type="EMBL" id="M36089">
    <property type="protein sequence ID" value="AAA63270.1"/>
    <property type="molecule type" value="mRNA"/>
</dbReference>
<dbReference type="EMBL" id="AF512504">
    <property type="protein sequence ID" value="AAM34791.1"/>
    <property type="molecule type" value="Genomic_DNA"/>
</dbReference>
<dbReference type="EMBL" id="CR456728">
    <property type="protein sequence ID" value="CAG33009.1"/>
    <property type="molecule type" value="mRNA"/>
</dbReference>
<dbReference type="EMBL" id="AC018758">
    <property type="protein sequence ID" value="AAG09061.1"/>
    <property type="molecule type" value="Genomic_DNA"/>
</dbReference>
<dbReference type="EMBL" id="KC877750">
    <property type="status" value="NOT_ANNOTATED_CDS"/>
    <property type="molecule type" value="Genomic_DNA"/>
</dbReference>
<dbReference type="EMBL" id="L34079">
    <property type="status" value="NOT_ANNOTATED_CDS"/>
    <property type="molecule type" value="Genomic_DNA"/>
</dbReference>
<dbReference type="EMBL" id="BC023593">
    <property type="protein sequence ID" value="AAH23593.1"/>
    <property type="molecule type" value="mRNA"/>
</dbReference>
<dbReference type="CCDS" id="CCDS12624.1"/>
<dbReference type="PIR" id="A36353">
    <property type="entry name" value="A36353"/>
</dbReference>
<dbReference type="RefSeq" id="NP_006288.2">
    <property type="nucleotide sequence ID" value="NM_006297.3"/>
</dbReference>
<dbReference type="PDB" id="1CDZ">
    <property type="method" value="X-ray"/>
    <property type="resolution" value="3.20 A"/>
    <property type="chains" value="A=538-633"/>
</dbReference>
<dbReference type="PDB" id="1XNA">
    <property type="method" value="NMR"/>
    <property type="chains" value="A=1-183"/>
</dbReference>
<dbReference type="PDB" id="1XNT">
    <property type="method" value="NMR"/>
    <property type="chains" value="A=1-183"/>
</dbReference>
<dbReference type="PDB" id="2D8M">
    <property type="method" value="NMR"/>
    <property type="chains" value="A=305-420"/>
</dbReference>
<dbReference type="PDB" id="2W3O">
    <property type="method" value="X-ray"/>
    <property type="resolution" value="1.85 A"/>
    <property type="chains" value="C/D=515-522"/>
</dbReference>
<dbReference type="PDB" id="3K75">
    <property type="method" value="X-ray"/>
    <property type="resolution" value="2.95 A"/>
    <property type="chains" value="B/C=1-183"/>
</dbReference>
<dbReference type="PDB" id="3K77">
    <property type="method" value="X-ray"/>
    <property type="resolution" value="2.60 A"/>
    <property type="chains" value="A/B/C/D/E/F/G/H=1-155"/>
</dbReference>
<dbReference type="PDB" id="3LQC">
    <property type="method" value="X-ray"/>
    <property type="resolution" value="2.35 A"/>
    <property type="chains" value="A=1-183"/>
</dbReference>
<dbReference type="PDB" id="5E6Q">
    <property type="method" value="X-ray"/>
    <property type="resolution" value="2.31 A"/>
    <property type="chains" value="A=241-276"/>
</dbReference>
<dbReference type="PDB" id="5W7X">
    <property type="method" value="X-ray"/>
    <property type="resolution" value="2.00 A"/>
    <property type="chains" value="E/F/G/H=514-522"/>
</dbReference>
<dbReference type="PDB" id="5W7Y">
    <property type="method" value="X-ray"/>
    <property type="resolution" value="2.10 A"/>
    <property type="chains" value="C/D=514-521"/>
</dbReference>
<dbReference type="PDB" id="6WH1">
    <property type="method" value="X-ray"/>
    <property type="resolution" value="2.40 A"/>
    <property type="chains" value="A=538-633"/>
</dbReference>
<dbReference type="PDB" id="6WH2">
    <property type="method" value="X-ray"/>
    <property type="resolution" value="2.41 A"/>
    <property type="chains" value="A/B=538-633"/>
</dbReference>
<dbReference type="PDBsum" id="1CDZ"/>
<dbReference type="PDBsum" id="1XNA"/>
<dbReference type="PDBsum" id="1XNT"/>
<dbReference type="PDBsum" id="2D8M"/>
<dbReference type="PDBsum" id="2W3O"/>
<dbReference type="PDBsum" id="3K75"/>
<dbReference type="PDBsum" id="3K77"/>
<dbReference type="PDBsum" id="3LQC"/>
<dbReference type="PDBsum" id="5E6Q"/>
<dbReference type="PDBsum" id="5W7X"/>
<dbReference type="PDBsum" id="5W7Y"/>
<dbReference type="PDBsum" id="6WH1"/>
<dbReference type="PDBsum" id="6WH2"/>
<dbReference type="BMRB" id="P18887"/>
<dbReference type="SASBDB" id="P18887"/>
<dbReference type="SMR" id="P18887"/>
<dbReference type="BioGRID" id="113349">
    <property type="interactions" value="222"/>
</dbReference>
<dbReference type="ComplexPortal" id="CPX-793">
    <property type="entry name" value="XRCC1 DNA repair complex"/>
</dbReference>
<dbReference type="CORUM" id="P18887"/>
<dbReference type="DIP" id="DIP-39067N"/>
<dbReference type="FunCoup" id="P18887">
    <property type="interactions" value="3457"/>
</dbReference>
<dbReference type="IntAct" id="P18887">
    <property type="interactions" value="101"/>
</dbReference>
<dbReference type="MINT" id="P18887"/>
<dbReference type="STRING" id="9606.ENSP00000262887"/>
<dbReference type="GlyGen" id="P18887">
    <property type="glycosylation" value="8 sites, 1 N-linked glycan (1 site), 2 O-linked glycans (7 sites)"/>
</dbReference>
<dbReference type="iPTMnet" id="P18887"/>
<dbReference type="PhosphoSitePlus" id="P18887"/>
<dbReference type="BioMuta" id="XRCC1"/>
<dbReference type="DMDM" id="317373290"/>
<dbReference type="jPOST" id="P18887"/>
<dbReference type="MassIVE" id="P18887"/>
<dbReference type="PaxDb" id="9606-ENSP00000262887"/>
<dbReference type="PeptideAtlas" id="P18887"/>
<dbReference type="ProteomicsDB" id="53619"/>
<dbReference type="Pumba" id="P18887"/>
<dbReference type="Antibodypedia" id="1863">
    <property type="antibodies" value="600 antibodies from 43 providers"/>
</dbReference>
<dbReference type="DNASU" id="7515"/>
<dbReference type="Ensembl" id="ENST00000262887.10">
    <property type="protein sequence ID" value="ENSP00000262887.5"/>
    <property type="gene ID" value="ENSG00000073050.12"/>
</dbReference>
<dbReference type="GeneID" id="7515"/>
<dbReference type="KEGG" id="hsa:7515"/>
<dbReference type="MANE-Select" id="ENST00000262887.10">
    <property type="protein sequence ID" value="ENSP00000262887.5"/>
    <property type="RefSeq nucleotide sequence ID" value="NM_006297.3"/>
    <property type="RefSeq protein sequence ID" value="NP_006288.2"/>
</dbReference>
<dbReference type="UCSC" id="uc002owt.3">
    <property type="organism name" value="human"/>
</dbReference>
<dbReference type="AGR" id="HGNC:12828"/>
<dbReference type="CTD" id="7515"/>
<dbReference type="DisGeNET" id="7515"/>
<dbReference type="GeneCards" id="XRCC1"/>
<dbReference type="HGNC" id="HGNC:12828">
    <property type="gene designation" value="XRCC1"/>
</dbReference>
<dbReference type="HPA" id="ENSG00000073050">
    <property type="expression patterns" value="Low tissue specificity"/>
</dbReference>
<dbReference type="MalaCards" id="XRCC1"/>
<dbReference type="MIM" id="194360">
    <property type="type" value="gene"/>
</dbReference>
<dbReference type="MIM" id="617633">
    <property type="type" value="phenotype"/>
</dbReference>
<dbReference type="neXtProt" id="NX_P18887"/>
<dbReference type="OpenTargets" id="ENSG00000073050"/>
<dbReference type="PharmGKB" id="PA369"/>
<dbReference type="VEuPathDB" id="HostDB:ENSG00000073050"/>
<dbReference type="eggNOG" id="KOG3226">
    <property type="taxonomic scope" value="Eukaryota"/>
</dbReference>
<dbReference type="GeneTree" id="ENSGT00390000004140"/>
<dbReference type="HOGENOM" id="CLU_030026_0_0_1"/>
<dbReference type="InParanoid" id="P18887"/>
<dbReference type="OMA" id="PEWIYAI"/>
<dbReference type="OrthoDB" id="25840at2759"/>
<dbReference type="PAN-GO" id="P18887">
    <property type="GO annotations" value="2 GO annotations based on evolutionary models"/>
</dbReference>
<dbReference type="PhylomeDB" id="P18887"/>
<dbReference type="TreeFam" id="TF101201"/>
<dbReference type="PathwayCommons" id="P18887"/>
<dbReference type="Reactome" id="R-HSA-110381">
    <property type="pathway name" value="Resolution of AP sites via the single-nucleotide replacement pathway"/>
</dbReference>
<dbReference type="Reactome" id="R-HSA-5649702">
    <property type="pathway name" value="APEX1-Independent Resolution of AP Sites via the Single Nucleotide Replacement Pathway"/>
</dbReference>
<dbReference type="Reactome" id="R-HSA-5685939">
    <property type="pathway name" value="HDR through MMEJ (alt-NHEJ)"/>
</dbReference>
<dbReference type="Reactome" id="R-HSA-5696397">
    <property type="pathway name" value="Gap-filling DNA repair synthesis and ligation in GG-NER"/>
</dbReference>
<dbReference type="Reactome" id="R-HSA-6782210">
    <property type="pathway name" value="Gap-filling DNA repair synthesis and ligation in TC-NER"/>
</dbReference>
<dbReference type="SignaLink" id="P18887"/>
<dbReference type="SIGNOR" id="P18887"/>
<dbReference type="BioGRID-ORCS" id="7515">
    <property type="hits" value="128 hits in 1163 CRISPR screens"/>
</dbReference>
<dbReference type="CD-CODE" id="8C2F96ED">
    <property type="entry name" value="Centrosome"/>
</dbReference>
<dbReference type="CD-CODE" id="91857CE7">
    <property type="entry name" value="Nucleolus"/>
</dbReference>
<dbReference type="CD-CODE" id="B5B9A610">
    <property type="entry name" value="PML body"/>
</dbReference>
<dbReference type="ChiTaRS" id="XRCC1">
    <property type="organism name" value="human"/>
</dbReference>
<dbReference type="EvolutionaryTrace" id="P18887"/>
<dbReference type="GeneWiki" id="XRCC1"/>
<dbReference type="GenomeRNAi" id="7515"/>
<dbReference type="Pharos" id="P18887">
    <property type="development level" value="Tbio"/>
</dbReference>
<dbReference type="PRO" id="PR:P18887"/>
<dbReference type="Proteomes" id="UP000005640">
    <property type="component" value="Chromosome 19"/>
</dbReference>
<dbReference type="RNAct" id="P18887">
    <property type="molecule type" value="protein"/>
</dbReference>
<dbReference type="Bgee" id="ENSG00000073050">
    <property type="expression patterns" value="Expressed in ventricular zone and 204 other cell types or tissues"/>
</dbReference>
<dbReference type="ExpressionAtlas" id="P18887">
    <property type="expression patterns" value="baseline and differential"/>
</dbReference>
<dbReference type="GO" id="GO:0000785">
    <property type="term" value="C:chromatin"/>
    <property type="evidence" value="ECO:0000314"/>
    <property type="project" value="UniProtKB"/>
</dbReference>
<dbReference type="GO" id="GO:0000781">
    <property type="term" value="C:chromosome, telomeric region"/>
    <property type="evidence" value="ECO:0007669"/>
    <property type="project" value="Ensembl"/>
</dbReference>
<dbReference type="GO" id="GO:0070522">
    <property type="term" value="C:ERCC4-ERCC1 complex"/>
    <property type="evidence" value="ECO:0007669"/>
    <property type="project" value="Ensembl"/>
</dbReference>
<dbReference type="GO" id="GO:0005730">
    <property type="term" value="C:nucleolus"/>
    <property type="evidence" value="ECO:0000314"/>
    <property type="project" value="UniProtKB"/>
</dbReference>
<dbReference type="GO" id="GO:0005654">
    <property type="term" value="C:nucleoplasm"/>
    <property type="evidence" value="ECO:0000314"/>
    <property type="project" value="HPA"/>
</dbReference>
<dbReference type="GO" id="GO:0005634">
    <property type="term" value="C:nucleus"/>
    <property type="evidence" value="ECO:0000318"/>
    <property type="project" value="GO_Central"/>
</dbReference>
<dbReference type="GO" id="GO:0090734">
    <property type="term" value="C:site of DNA damage"/>
    <property type="evidence" value="ECO:0000314"/>
    <property type="project" value="UniProtKB"/>
</dbReference>
<dbReference type="GO" id="GO:1990599">
    <property type="term" value="F:3' overhang single-stranded DNA endodeoxyribonuclease activity"/>
    <property type="evidence" value="ECO:0007669"/>
    <property type="project" value="Ensembl"/>
</dbReference>
<dbReference type="GO" id="GO:0160002">
    <property type="term" value="F:ADP-D-ribose modification-dependent protein binding"/>
    <property type="evidence" value="ECO:0000314"/>
    <property type="project" value="UniProt"/>
</dbReference>
<dbReference type="GO" id="GO:0019899">
    <property type="term" value="F:enzyme binding"/>
    <property type="evidence" value="ECO:0000353"/>
    <property type="project" value="BHF-UCL"/>
</dbReference>
<dbReference type="GO" id="GO:0032356">
    <property type="term" value="F:oxidized DNA binding"/>
    <property type="evidence" value="ECO:0000315"/>
    <property type="project" value="UniProtKB"/>
</dbReference>
<dbReference type="GO" id="GO:0072572">
    <property type="term" value="F:poly-ADP-D-ribose binding"/>
    <property type="evidence" value="ECO:0000314"/>
    <property type="project" value="UniProtKB"/>
</dbReference>
<dbReference type="GO" id="GO:0006284">
    <property type="term" value="P:base-excision repair"/>
    <property type="evidence" value="ECO:0000314"/>
    <property type="project" value="UniProtKB"/>
</dbReference>
<dbReference type="GO" id="GO:0006302">
    <property type="term" value="P:double-strand break repair"/>
    <property type="evidence" value="ECO:0000314"/>
    <property type="project" value="BHF-UCL"/>
</dbReference>
<dbReference type="GO" id="GO:0006303">
    <property type="term" value="P:double-strand break repair via nonhomologous end joining"/>
    <property type="evidence" value="ECO:0007669"/>
    <property type="project" value="Ensembl"/>
</dbReference>
<dbReference type="GO" id="GO:0021766">
    <property type="term" value="P:hippocampus development"/>
    <property type="evidence" value="ECO:0007669"/>
    <property type="project" value="Ensembl"/>
</dbReference>
<dbReference type="GO" id="GO:1905765">
    <property type="term" value="P:negative regulation of protection from non-homologous end joining at telomere"/>
    <property type="evidence" value="ECO:0007669"/>
    <property type="project" value="Ensembl"/>
</dbReference>
<dbReference type="GO" id="GO:0010836">
    <property type="term" value="P:negative regulation of protein ADP-ribosylation"/>
    <property type="evidence" value="ECO:0000314"/>
    <property type="project" value="UniProtKB"/>
</dbReference>
<dbReference type="GO" id="GO:1905051">
    <property type="term" value="P:regulation of base-excision repair"/>
    <property type="evidence" value="ECO:0000314"/>
    <property type="project" value="UniProt"/>
</dbReference>
<dbReference type="GO" id="GO:0033194">
    <property type="term" value="P:response to hydroperoxide"/>
    <property type="evidence" value="ECO:0000314"/>
    <property type="project" value="UniProtKB"/>
</dbReference>
<dbReference type="GO" id="GO:0000012">
    <property type="term" value="P:single strand break repair"/>
    <property type="evidence" value="ECO:0000315"/>
    <property type="project" value="UniProtKB"/>
</dbReference>
<dbReference type="GO" id="GO:0061819">
    <property type="term" value="P:telomeric DNA-containing double minutes formation"/>
    <property type="evidence" value="ECO:0007669"/>
    <property type="project" value="Ensembl"/>
</dbReference>
<dbReference type="CDD" id="cd17725">
    <property type="entry name" value="BRCT_XRCC1_rpt1"/>
    <property type="match status" value="1"/>
</dbReference>
<dbReference type="CDD" id="cd17707">
    <property type="entry name" value="BRCT_XRCC1_rpt2"/>
    <property type="match status" value="1"/>
</dbReference>
<dbReference type="FunFam" id="2.60.120.260:FF:000025">
    <property type="entry name" value="DNA repair protein XRCC1 isoform X1"/>
    <property type="match status" value="1"/>
</dbReference>
<dbReference type="FunFam" id="3.40.50.10190:FF:000008">
    <property type="entry name" value="X-ray repair cross complementing 1"/>
    <property type="match status" value="1"/>
</dbReference>
<dbReference type="FunFam" id="3.40.50.10190:FF:000012">
    <property type="entry name" value="X-ray repair cross complementing 1"/>
    <property type="match status" value="1"/>
</dbReference>
<dbReference type="Gene3D" id="3.40.50.10190">
    <property type="entry name" value="BRCT domain"/>
    <property type="match status" value="2"/>
</dbReference>
<dbReference type="Gene3D" id="2.60.120.260">
    <property type="entry name" value="Galactose-binding domain-like"/>
    <property type="match status" value="1"/>
</dbReference>
<dbReference type="InterPro" id="IPR001357">
    <property type="entry name" value="BRCT_dom"/>
</dbReference>
<dbReference type="InterPro" id="IPR036420">
    <property type="entry name" value="BRCT_dom_sf"/>
</dbReference>
<dbReference type="InterPro" id="IPR045080">
    <property type="entry name" value="BRCT_XRCC1_rpt1"/>
</dbReference>
<dbReference type="InterPro" id="IPR008979">
    <property type="entry name" value="Galactose-bd-like_sf"/>
</dbReference>
<dbReference type="InterPro" id="IPR002706">
    <property type="entry name" value="Xrcc1_N"/>
</dbReference>
<dbReference type="PANTHER" id="PTHR11370:SF5">
    <property type="entry name" value="DNA REPAIR PROTEIN XRCC1"/>
    <property type="match status" value="1"/>
</dbReference>
<dbReference type="PANTHER" id="PTHR11370">
    <property type="entry name" value="DNA-REPAIR PROTEIN XRCC1"/>
    <property type="match status" value="1"/>
</dbReference>
<dbReference type="Pfam" id="PF00533">
    <property type="entry name" value="BRCT"/>
    <property type="match status" value="1"/>
</dbReference>
<dbReference type="Pfam" id="PF16589">
    <property type="entry name" value="BRCT_2"/>
    <property type="match status" value="1"/>
</dbReference>
<dbReference type="Pfam" id="PF01834">
    <property type="entry name" value="XRCC1_N"/>
    <property type="match status" value="1"/>
</dbReference>
<dbReference type="SMART" id="SM00292">
    <property type="entry name" value="BRCT"/>
    <property type="match status" value="2"/>
</dbReference>
<dbReference type="SUPFAM" id="SSF52113">
    <property type="entry name" value="BRCT domain"/>
    <property type="match status" value="2"/>
</dbReference>
<dbReference type="SUPFAM" id="SSF49785">
    <property type="entry name" value="Galactose-binding domain-like"/>
    <property type="match status" value="1"/>
</dbReference>
<dbReference type="PROSITE" id="PS50172">
    <property type="entry name" value="BRCT"/>
    <property type="match status" value="2"/>
</dbReference>
<feature type="chain" id="PRO_0000066044" description="DNA repair protein XRCC1">
    <location>
        <begin position="1"/>
        <end position="633"/>
    </location>
</feature>
<feature type="domain" description="BRCT 1" evidence="1">
    <location>
        <begin position="315"/>
        <end position="403"/>
    </location>
</feature>
<feature type="domain" description="BRCT 2" evidence="1">
    <location>
        <begin position="538"/>
        <end position="629"/>
    </location>
</feature>
<feature type="region of interest" description="Disordered" evidence="2">
    <location>
        <begin position="221"/>
        <end position="313"/>
    </location>
</feature>
<feature type="region of interest" description="Disordered" evidence="2">
    <location>
        <begin position="400"/>
        <end position="462"/>
    </location>
</feature>
<feature type="region of interest" description="Disordered" evidence="2">
    <location>
        <begin position="471"/>
        <end position="490"/>
    </location>
</feature>
<feature type="region of interest" description="Disordered" evidence="2">
    <location>
        <begin position="498"/>
        <end position="536"/>
    </location>
</feature>
<feature type="compositionally biased region" description="Low complexity" evidence="2">
    <location>
        <begin position="221"/>
        <end position="231"/>
    </location>
</feature>
<feature type="compositionally biased region" description="Basic and acidic residues" evidence="2">
    <location>
        <begin position="240"/>
        <end position="257"/>
    </location>
</feature>
<feature type="compositionally biased region" description="Low complexity" evidence="2">
    <location>
        <begin position="277"/>
        <end position="291"/>
    </location>
</feature>
<feature type="compositionally biased region" description="Basic and acidic residues" evidence="2">
    <location>
        <begin position="299"/>
        <end position="313"/>
    </location>
</feature>
<feature type="compositionally biased region" description="Low complexity" evidence="2">
    <location>
        <begin position="427"/>
        <end position="443"/>
    </location>
</feature>
<feature type="compositionally biased region" description="Acidic residues" evidence="2">
    <location>
        <begin position="481"/>
        <end position="490"/>
    </location>
</feature>
<feature type="modified residue" description="Phosphoserine" evidence="32">
    <location>
        <position position="140"/>
    </location>
</feature>
<feature type="modified residue" description="Phosphothreonine" evidence="31">
    <location>
        <position position="198"/>
    </location>
</feature>
<feature type="modified residue" description="Phosphoserine" evidence="31">
    <location>
        <position position="199"/>
    </location>
</feature>
<feature type="modified residue" description="Phosphothreonine" evidence="32">
    <location>
        <position position="202"/>
    </location>
</feature>
<feature type="modified residue" description="Phosphoserine" evidence="32">
    <location>
        <position position="204"/>
    </location>
</feature>
<feature type="modified residue" description="Phosphoserine" evidence="30 31 34">
    <location>
        <position position="226"/>
    </location>
</feature>
<feature type="modified residue" description="Phosphoserine" evidence="30 31 32 33 34">
    <location>
        <position position="241"/>
    </location>
</feature>
<feature type="modified residue" description="Phosphothreonine" evidence="30 32">
    <location>
        <position position="257"/>
    </location>
</feature>
<feature type="modified residue" description="Phosphoserine" evidence="30">
    <location>
        <position position="259"/>
    </location>
</feature>
<feature type="modified residue" description="Phosphoserine" evidence="34">
    <location>
        <position position="266"/>
    </location>
</feature>
<feature type="modified residue" description="Phosphothreonine" evidence="34">
    <location>
        <position position="281"/>
    </location>
</feature>
<feature type="modified residue" description="Phosphoserine; by PRKDC" evidence="13">
    <location>
        <position position="371"/>
    </location>
</feature>
<feature type="modified residue" description="Phosphoserine" evidence="30">
    <location>
        <position position="408"/>
    </location>
</feature>
<feature type="modified residue" description="Phosphoserine" evidence="30">
    <location>
        <position position="409"/>
    </location>
</feature>
<feature type="modified residue" description="Phosphoserine" evidence="30">
    <location>
        <position position="410"/>
    </location>
</feature>
<feature type="modified residue" description="Phosphoserine" evidence="29">
    <location>
        <position position="421"/>
    </location>
</feature>
<feature type="modified residue" description="Phosphoserine" evidence="35">
    <location>
        <position position="446"/>
    </location>
</feature>
<feature type="modified residue" description="Phosphoserine" evidence="34 35">
    <location>
        <position position="447"/>
    </location>
</feature>
<feature type="modified residue" description="Phosphothreonine" evidence="30 31 33 34 35">
    <location>
        <position position="453"/>
    </location>
</feature>
<feature type="modified residue" description="Phosphothreonine" evidence="33 34 35">
    <location>
        <position position="457"/>
    </location>
</feature>
<feature type="modified residue" description="Phosphoserine" evidence="31 35">
    <location>
        <position position="461"/>
    </location>
</feature>
<feature type="modified residue" description="Phosphoserine" evidence="10 31">
    <location>
        <position position="485"/>
    </location>
</feature>
<feature type="modified residue" description="Phosphothreonine" evidence="10 31">
    <location>
        <position position="488"/>
    </location>
</feature>
<feature type="modified residue" description="Phosphoserine" evidence="17">
    <location>
        <position position="518"/>
    </location>
</feature>
<feature type="modified residue" description="Phosphothreonine" evidence="17">
    <location>
        <position position="519"/>
    </location>
</feature>
<feature type="modified residue" description="Phosphothreonine" evidence="17">
    <location>
        <position position="523"/>
    </location>
</feature>
<feature type="cross-link" description="Glycyl lysine isopeptide (Lys-Gly) (interchain with G-Cter in SUMO1); alternate" evidence="36">
    <location>
        <position position="176"/>
    </location>
</feature>
<feature type="cross-link" description="Glycyl lysine isopeptide (Lys-Gly) (interchain with G-Cter in SUMO2); alternate" evidence="37 38 39">
    <location>
        <position position="176"/>
    </location>
</feature>
<feature type="sequence variant" id="VAR_014773" description="In dbSNP:rs2307186.">
    <original>R</original>
    <variation>L</variation>
    <location>
        <position position="7"/>
    </location>
</feature>
<feature type="sequence variant" id="VAR_014774" description="In dbSNP:rs2307171.">
    <original>V</original>
    <variation>M</variation>
    <location>
        <position position="10"/>
    </location>
</feature>
<feature type="sequence variant" id="VAR_016168" description="In dbSNP:rs25496." evidence="25">
    <original>V</original>
    <variation>A</variation>
    <location>
        <position position="72"/>
    </location>
</feature>
<feature type="sequence variant" id="VAR_029228" description="In dbSNP:rs2228487.">
    <original>R</original>
    <variation>H</variation>
    <location>
        <position position="107"/>
    </location>
</feature>
<feature type="sequence variant" id="VAR_014775" description="In dbSNP:rs2307180.">
    <original>E</original>
    <variation>K</variation>
    <location>
        <position position="157"/>
    </location>
</feature>
<feature type="sequence variant" id="VAR_014776" description="In dbSNP:rs2307191." evidence="25">
    <original>P</original>
    <variation>L</variation>
    <location>
        <position position="161"/>
    </location>
</feature>
<feature type="sequence variant" id="VAR_013400" description="In dbSNP:rs1799782." evidence="24 25">
    <original>R</original>
    <variation>W</variation>
    <location>
        <position position="194"/>
    </location>
</feature>
<feature type="sequence variant" id="VAR_013401" description="In dbSNP:rs25489." evidence="24 25">
    <original>R</original>
    <variation>H</variation>
    <location>
        <position position="280"/>
    </location>
</feature>
<feature type="sequence variant" id="VAR_014777" description="In dbSNP:rs2307188.">
    <original>K</original>
    <variation>N</variation>
    <location>
        <position position="298"/>
    </location>
</feature>
<feature type="sequence variant" id="VAR_018775" description="In dbSNP:rs25490." evidence="25">
    <original>T</original>
    <variation>A</variation>
    <location>
        <position position="304"/>
    </location>
</feature>
<feature type="sequence variant" id="VAR_014778" description="In dbSNP:rs25491." evidence="25">
    <original>P</original>
    <variation>S</variation>
    <location>
        <position position="309"/>
    </location>
</feature>
<feature type="sequence variant" id="VAR_036277" description="In a colorectal cancer sample; somatic mutation; dbSNP:rs754041352." evidence="14">
    <original>R</original>
    <variation>W</variation>
    <location>
        <position position="350"/>
    </location>
</feature>
<feature type="sequence variant" id="VAR_011487" description="In dbSNP:rs25487." evidence="3 5 20 24 25">
    <original>Q</original>
    <variation>R</variation>
    <location>
        <position position="399"/>
    </location>
</feature>
<feature type="sequence variant" id="VAR_079140" description="In SCAR26; may result in aberrant splicing; dbSNP:rs761564262." evidence="21">
    <original>K</original>
    <variation>N</variation>
    <location>
        <position position="431"/>
    </location>
</feature>
<feature type="sequence variant" id="VAR_079141" description="In SCAR26." evidence="21">
    <location>
        <begin position="465"/>
        <end position="633"/>
    </location>
</feature>
<feature type="sequence variant" id="VAR_014779" description="In dbSNP:rs2307184.">
    <original>S</original>
    <variation>Y</variation>
    <location>
        <position position="485"/>
    </location>
</feature>
<feature type="sequence variant" id="VAR_016169" description="In dbSNP:rs25474.">
    <original>P</original>
    <variation>L</variation>
    <location>
        <position position="514"/>
    </location>
</feature>
<feature type="sequence variant" id="VAR_014780" description="In dbSNP:rs2307167.">
    <original>R</original>
    <variation>Q</variation>
    <location>
        <position position="559"/>
    </location>
</feature>
<feature type="sequence variant" id="VAR_014781" description="In dbSNP:rs2307166.">
    <original>R</original>
    <variation>W</variation>
    <location>
        <position position="560"/>
    </location>
</feature>
<feature type="sequence variant" id="VAR_061727" description="In dbSNP:rs2682557." evidence="9">
    <original>Y</original>
    <variation>N</variation>
    <location>
        <position position="576"/>
    </location>
</feature>
<feature type="sequence variant" id="VAR_014782" description="In dbSNP:rs2307177." evidence="25">
    <original>Y</original>
    <variation>S</variation>
    <location>
        <position position="576"/>
    </location>
</feature>
<feature type="mutagenesis site" description="Abolished binding to poly-ADP-ribose and ability to inhibit PARP1 activity; when associated with A-369." evidence="23">
    <original>R</original>
    <variation>A</variation>
    <location>
        <position position="335"/>
    </location>
</feature>
<feature type="mutagenesis site" description="Reduced binding to poly-ADP-ribose nuclear foci." evidence="6">
    <original>LI</original>
    <variation>DD</variation>
    <location>
        <begin position="360"/>
        <end position="361"/>
    </location>
</feature>
<feature type="mutagenesis site" description="Abolished binding to poly-ADP-ribose and ability to inhibit PARP1 activity; when associated with A-335." evidence="23">
    <original>K</original>
    <variation>A</variation>
    <location>
        <position position="369"/>
    </location>
</feature>
<feature type="mutagenesis site" description="Strongly reduced binding to poly-ADP-ribose nuclear foci." evidence="6">
    <original>W</original>
    <variation>D</variation>
    <location>
        <position position="385"/>
    </location>
</feature>
<feature type="mutagenesis site" description="Reduced binding to poly-ADP-ribose nuclear foci." evidence="6">
    <original>C</original>
    <variation>A</variation>
    <location>
        <position position="389"/>
    </location>
</feature>
<feature type="helix" evidence="43">
    <location>
        <begin position="4"/>
        <end position="6"/>
    </location>
</feature>
<feature type="strand" evidence="43">
    <location>
        <begin position="7"/>
        <end position="12"/>
    </location>
</feature>
<feature type="helix" evidence="43">
    <location>
        <begin position="17"/>
        <end position="25"/>
    </location>
</feature>
<feature type="helix" evidence="43">
    <location>
        <begin position="28"/>
        <end position="36"/>
    </location>
</feature>
<feature type="turn" evidence="43">
    <location>
        <begin position="37"/>
        <end position="39"/>
    </location>
</feature>
<feature type="strand" evidence="43">
    <location>
        <begin position="41"/>
        <end position="53"/>
    </location>
</feature>
<feature type="strand" evidence="43">
    <location>
        <begin position="57"/>
        <end position="64"/>
    </location>
</feature>
<feature type="strand" evidence="43">
    <location>
        <begin position="66"/>
        <end position="73"/>
    </location>
</feature>
<feature type="strand" evidence="40">
    <location>
        <begin position="75"/>
        <end position="77"/>
    </location>
</feature>
<feature type="helix" evidence="43">
    <location>
        <begin position="81"/>
        <end position="83"/>
    </location>
</feature>
<feature type="strand" evidence="43">
    <location>
        <begin position="85"/>
        <end position="93"/>
    </location>
</feature>
<feature type="helix" evidence="43">
    <location>
        <begin position="96"/>
        <end position="101"/>
    </location>
</feature>
<feature type="strand" evidence="43">
    <location>
        <begin position="108"/>
        <end position="111"/>
    </location>
</feature>
<feature type="helix" evidence="43">
    <location>
        <begin position="113"/>
        <end position="115"/>
    </location>
</feature>
<feature type="helix" evidence="43">
    <location>
        <begin position="118"/>
        <end position="121"/>
    </location>
</feature>
<feature type="strand" evidence="43">
    <location>
        <begin position="125"/>
        <end position="133"/>
    </location>
</feature>
<feature type="strand" evidence="42">
    <location>
        <begin position="138"/>
        <end position="140"/>
    </location>
</feature>
<feature type="strand" evidence="43">
    <location>
        <begin position="143"/>
        <end position="150"/>
    </location>
</feature>
<feature type="helix" evidence="41">
    <location>
        <begin position="313"/>
        <end position="316"/>
    </location>
</feature>
<feature type="turn" evidence="41">
    <location>
        <begin position="317"/>
        <end position="319"/>
    </location>
</feature>
<feature type="strand" evidence="41">
    <location>
        <begin position="323"/>
        <end position="329"/>
    </location>
</feature>
<feature type="helix" evidence="41">
    <location>
        <begin position="334"/>
        <end position="344"/>
    </location>
</feature>
<feature type="strand" evidence="41">
    <location>
        <begin position="347"/>
        <end position="352"/>
    </location>
</feature>
<feature type="strand" evidence="41">
    <location>
        <begin position="359"/>
        <end position="366"/>
    </location>
</feature>
<feature type="helix" evidence="41">
    <location>
        <begin position="368"/>
        <end position="376"/>
    </location>
</feature>
<feature type="strand" evidence="41">
    <location>
        <begin position="379"/>
        <end position="382"/>
    </location>
</feature>
<feature type="helix" evidence="41">
    <location>
        <begin position="384"/>
        <end position="391"/>
    </location>
</feature>
<feature type="helix" evidence="41">
    <location>
        <begin position="398"/>
        <end position="401"/>
    </location>
</feature>
<feature type="strand" evidence="41">
    <location>
        <begin position="404"/>
        <end position="407"/>
    </location>
</feature>
<feature type="turn" evidence="44">
    <location>
        <begin position="542"/>
        <end position="545"/>
    </location>
</feature>
<feature type="strand" evidence="44">
    <location>
        <begin position="547"/>
        <end position="550"/>
    </location>
</feature>
<feature type="helix" evidence="44">
    <location>
        <begin position="558"/>
        <end position="568"/>
    </location>
</feature>
<feature type="strand" evidence="44">
    <location>
        <begin position="583"/>
        <end position="585"/>
    </location>
</feature>
<feature type="helix" evidence="44">
    <location>
        <begin position="592"/>
        <end position="600"/>
    </location>
</feature>
<feature type="strand" evidence="44">
    <location>
        <begin position="605"/>
        <end position="607"/>
    </location>
</feature>
<feature type="helix" evidence="44">
    <location>
        <begin position="609"/>
        <end position="618"/>
    </location>
</feature>
<feature type="helix" evidence="44">
    <location>
        <begin position="624"/>
        <end position="627"/>
    </location>
</feature>
<sequence>MPEIRLRHVVSCSSQDSTHCAENLLKADTYRKWRAAKAGEKTISVVLQLEKEEQIHSVDIGNDGSAFVEVLVGSSAGGAGEQDYEVLLVTSSFMSPSESRSGSNPNRVRMFGPDKLVRAAAEKRWDRVKIVCSQPYSKDSPFGLSFVRFHSPPDKDEAEAPSQKVTVTKLGQFRVKEEDESANSLRPGALFFSRINKTSPVTASDPAGPSYAAATLQASSAASSASPVSRAIGSTSKPQESPKGKRKLDLNQEEKKTPSKPPAQLSPSVPKRPKLPAPTRTPATAPVPARAQGAVTGKPRGEGTEPRRPRAGPEELGKILQGVVVVLSGFQNPFRSELRDKALELGAKYRPDWTRDSTHLICAFANTPKYSQVLGLGGRIVRKEWVLDCHRMRRRLPSQRYLMAGPGSSSEEDEASHSGGSGDEAPKLPQKQPQTKTKPTQAAGPSSPQKPPTPEETKAASPVLQEDIDIEGVQSEGQDNGAEDSGDTEDELRRVAEQKEHRLPPGQEENGEDPYAGSTDENTDSEEHQEPPDLPVPELPDFFQGKHFFLYGEFPGDERRKLIRYVTAFNGELEDYMSDRVQFVITAQEWDPSFEEALMDNPSLAFVRPRWIYSCNEKQKLLPHQLYGVVPQA</sequence>
<reference key="1">
    <citation type="journal article" date="1990" name="Mol. Cell. Biol.">
        <title>Molecular cloning of the human XRCC1 gene, which corrects defective DNA strand break repair and sister chromatid exchange.</title>
        <authorList>
            <person name="Thompson L.H."/>
            <person name="Brookman K.W."/>
            <person name="Jones N.J."/>
            <person name="Allen S.A."/>
            <person name="Carrano A.V."/>
        </authorList>
    </citation>
    <scope>NUCLEOTIDE SEQUENCE [MRNA]</scope>
    <scope>VARIANT ARG-399</scope>
</reference>
<reference key="2">
    <citation type="submission" date="2002-05" db="EMBL/GenBank/DDBJ databases">
        <authorList>
            <consortium name="NIEHS SNPs program"/>
        </authorList>
    </citation>
    <scope>NUCLEOTIDE SEQUENCE [GENOMIC DNA]</scope>
    <scope>VARIANTS ALA-72; LEU-161; TRP-194; HIS-280; ALA-304; SER-309; ARG-399 AND SER-576</scope>
</reference>
<reference key="3">
    <citation type="submission" date="2004-06" db="EMBL/GenBank/DDBJ databases">
        <title>Cloning of human full open reading frames in Gateway(TM) system entry vector (pDONR201).</title>
        <authorList>
            <person name="Ebert L."/>
            <person name="Schick M."/>
            <person name="Neubert P."/>
            <person name="Schatten R."/>
            <person name="Henze S."/>
            <person name="Korn B."/>
        </authorList>
    </citation>
    <scope>NUCLEOTIDE SEQUENCE [LARGE SCALE MRNA]</scope>
</reference>
<reference key="4">
    <citation type="journal article" date="2004" name="Nature">
        <title>The DNA sequence and biology of human chromosome 19.</title>
        <authorList>
            <person name="Grimwood J."/>
            <person name="Gordon L.A."/>
            <person name="Olsen A.S."/>
            <person name="Terry A."/>
            <person name="Schmutz J."/>
            <person name="Lamerdin J.E."/>
            <person name="Hellsten U."/>
            <person name="Goodstein D."/>
            <person name="Couronne O."/>
            <person name="Tran-Gyamfi M."/>
            <person name="Aerts A."/>
            <person name="Altherr M."/>
            <person name="Ashworth L."/>
            <person name="Bajorek E."/>
            <person name="Black S."/>
            <person name="Branscomb E."/>
            <person name="Caenepeel S."/>
            <person name="Carrano A.V."/>
            <person name="Caoile C."/>
            <person name="Chan Y.M."/>
            <person name="Christensen M."/>
            <person name="Cleland C.A."/>
            <person name="Copeland A."/>
            <person name="Dalin E."/>
            <person name="Dehal P."/>
            <person name="Denys M."/>
            <person name="Detter J.C."/>
            <person name="Escobar J."/>
            <person name="Flowers D."/>
            <person name="Fotopulos D."/>
            <person name="Garcia C."/>
            <person name="Georgescu A.M."/>
            <person name="Glavina T."/>
            <person name="Gomez M."/>
            <person name="Gonzales E."/>
            <person name="Groza M."/>
            <person name="Hammon N."/>
            <person name="Hawkins T."/>
            <person name="Haydu L."/>
            <person name="Ho I."/>
            <person name="Huang W."/>
            <person name="Israni S."/>
            <person name="Jett J."/>
            <person name="Kadner K."/>
            <person name="Kimball H."/>
            <person name="Kobayashi A."/>
            <person name="Larionov V."/>
            <person name="Leem S.-H."/>
            <person name="Lopez F."/>
            <person name="Lou Y."/>
            <person name="Lowry S."/>
            <person name="Malfatti S."/>
            <person name="Martinez D."/>
            <person name="McCready P.M."/>
            <person name="Medina C."/>
            <person name="Morgan J."/>
            <person name="Nelson K."/>
            <person name="Nolan M."/>
            <person name="Ovcharenko I."/>
            <person name="Pitluck S."/>
            <person name="Pollard M."/>
            <person name="Popkie A.P."/>
            <person name="Predki P."/>
            <person name="Quan G."/>
            <person name="Ramirez L."/>
            <person name="Rash S."/>
            <person name="Retterer J."/>
            <person name="Rodriguez A."/>
            <person name="Rogers S."/>
            <person name="Salamov A."/>
            <person name="Salazar A."/>
            <person name="She X."/>
            <person name="Smith D."/>
            <person name="Slezak T."/>
            <person name="Solovyev V."/>
            <person name="Thayer N."/>
            <person name="Tice H."/>
            <person name="Tsai M."/>
            <person name="Ustaszewska A."/>
            <person name="Vo N."/>
            <person name="Wagner M."/>
            <person name="Wheeler J."/>
            <person name="Wu K."/>
            <person name="Xie G."/>
            <person name="Yang J."/>
            <person name="Dubchak I."/>
            <person name="Furey T.S."/>
            <person name="DeJong P."/>
            <person name="Dickson M."/>
            <person name="Gordon D."/>
            <person name="Eichler E.E."/>
            <person name="Pennacchio L.A."/>
            <person name="Richardson P."/>
            <person name="Stubbs L."/>
            <person name="Rokhsar D.S."/>
            <person name="Myers R.M."/>
            <person name="Rubin E.M."/>
            <person name="Lucas S.M."/>
        </authorList>
    </citation>
    <scope>NUCLEOTIDE SEQUENCE [LARGE SCALE GENOMIC DNA]</scope>
    <scope>VARIANT ASN-576</scope>
</reference>
<reference key="5">
    <citation type="journal article" date="2004" name="Genome Res.">
        <title>The status, quality, and expansion of the NIH full-length cDNA project: the Mammalian Gene Collection (MGC).</title>
        <authorList>
            <consortium name="The MGC Project Team"/>
        </authorList>
    </citation>
    <scope>NUCLEOTIDE SEQUENCE [LARGE SCALE MRNA]</scope>
    <source>
        <tissue>Eye</tissue>
    </source>
</reference>
<reference key="6">
    <citation type="journal article" date="2001" name="Cell">
        <title>XRCC1 stimulates human polynucleotide kinase activity at damaged DNA termini and accelerates DNA single-strand break repair.</title>
        <authorList>
            <person name="Whitehouse C.J."/>
            <person name="Taylor R.M."/>
            <person name="Thistlethwaite A."/>
            <person name="Zhang H."/>
            <person name="Karimi-Busheri F."/>
            <person name="Lasko D.D."/>
            <person name="Weinfeld M."/>
            <person name="Caldecott K.W."/>
        </authorList>
    </citation>
    <scope>FUNCTION</scope>
</reference>
<reference key="7">
    <citation type="journal article" date="2003" name="Nucleic Acids Res.">
        <title>A requirement for PARP-1 for the assembly or stability of XRCC1 nuclear foci at sites of oxidative DNA damage.</title>
        <authorList>
            <person name="El-Khamisy S.F."/>
            <person name="Masutani M."/>
            <person name="Suzuki H."/>
            <person name="Caldecott K.W."/>
        </authorList>
    </citation>
    <scope>FUNCTION</scope>
    <scope>SUBCELLULAR LOCATION</scope>
    <scope>MUTAGENESIS OF 360-LEU-ILE-361; TRP-385 AND CYS-389</scope>
</reference>
<reference key="8">
    <citation type="journal article" date="2004" name="Ann. Neurol.">
        <title>Aprataxin, the causative protein for EAOH is a nuclear protein with a potential role as a DNA repair protein.</title>
        <authorList>
            <person name="Sano Y."/>
            <person name="Date H."/>
            <person name="Igarashi S."/>
            <person name="Onodera O."/>
            <person name="Oyake M."/>
            <person name="Takahashi T."/>
            <person name="Hayashi S."/>
            <person name="Morimatsu M."/>
            <person name="Takahashi H."/>
            <person name="Makifuchi T."/>
            <person name="Fukuhara N."/>
            <person name="Tsuji S."/>
        </authorList>
    </citation>
    <scope>INTERACTION WITH APTX</scope>
</reference>
<reference key="9">
    <citation type="journal article" date="2004" name="Cell">
        <title>The protein kinase CK2 facilitates repair of chromosomal DNA single-strand breaks.</title>
        <authorList>
            <person name="Loizou J.I."/>
            <person name="El-Khamisy S.F."/>
            <person name="Zlatanou A."/>
            <person name="Moore D.J."/>
            <person name="Chan D.W."/>
            <person name="Qin J."/>
            <person name="Sarno S."/>
            <person name="Meggio F."/>
            <person name="Pinna L.A."/>
            <person name="Caldecott K.W."/>
        </authorList>
    </citation>
    <scope>PHOSPHORYLATION AT SER-485 AND THR-488</scope>
    <scope>IDENTIFICATION BY MASS SPECTROMETRY</scope>
</reference>
<reference key="10">
    <citation type="journal article" date="2004" name="DNA Repair">
        <title>The ataxia-oculomotor apraxia 1 gene product has a role distinct from ATM and interacts with the DNA strand break repair proteins XRCC1 and XRCC4.</title>
        <authorList>
            <person name="Clements P.M."/>
            <person name="Breslin C."/>
            <person name="Deeks E.D."/>
            <person name="Byrd P.J."/>
            <person name="Ju L."/>
            <person name="Bieganowski P."/>
            <person name="Brenner C."/>
            <person name="Moreira M.-C."/>
            <person name="Taylor A.M.R."/>
            <person name="Caldecott K.W."/>
        </authorList>
    </citation>
    <scope>INTERACTION WITH APTX</scope>
    <scope>PHOSPHORYLATION</scope>
</reference>
<reference key="11">
    <citation type="journal article" date="2004" name="Hum. Mol. Genet.">
        <title>Aprataxin, a novel protein that protects against genotoxic stress.</title>
        <authorList>
            <person name="Gueven N."/>
            <person name="Becherel O.J."/>
            <person name="Kijas A.W."/>
            <person name="Chen P."/>
            <person name="Howe O."/>
            <person name="Rudolph J.H."/>
            <person name="Gatti R."/>
            <person name="Date H."/>
            <person name="Onodera O."/>
            <person name="Taucher-Scholz G."/>
            <person name="Lavin M.F."/>
        </authorList>
    </citation>
    <scope>INTERACTION WITH APTX</scope>
</reference>
<reference key="12">
    <citation type="journal article" date="2005" name="J. Biol. Chem.">
        <title>Systematic identification and analysis of mammalian small ubiquitin-like modifier substrates.</title>
        <authorList>
            <person name="Gocke C.B."/>
            <person name="Yu H."/>
            <person name="Kang J."/>
        </authorList>
    </citation>
    <scope>SUMOYLATION</scope>
</reference>
<reference key="13">
    <citation type="journal article" date="2006" name="Cell">
        <title>Global, in vivo, and site-specific phosphorylation dynamics in signaling networks.</title>
        <authorList>
            <person name="Olsen J.V."/>
            <person name="Blagoev B."/>
            <person name="Gnad F."/>
            <person name="Macek B."/>
            <person name="Kumar C."/>
            <person name="Mortensen P."/>
            <person name="Mann M."/>
        </authorList>
    </citation>
    <scope>PHOSPHORYLATION [LARGE SCALE ANALYSIS] AT SER-421</scope>
    <scope>IDENTIFICATION BY MASS SPECTROMETRY [LARGE SCALE ANALYSIS]</scope>
    <source>
        <tissue>Cervix carcinoma</tissue>
    </source>
</reference>
<reference key="14">
    <citation type="journal article" date="2006" name="Nucleic Acids Res.">
        <title>XRCC1 is phosphorylated by DNA-dependent protein kinase in response to DNA damage.</title>
        <authorList>
            <person name="Levy N."/>
            <person name="Martz A."/>
            <person name="Bresson A."/>
            <person name="Spenlehauer C."/>
            <person name="de Murcia G."/>
            <person name="Menissier-de Murcia J."/>
        </authorList>
    </citation>
    <scope>SUBUNIT</scope>
    <scope>PHOSPHORYLATION AT SER-371</scope>
</reference>
<reference key="15">
    <citation type="journal article" date="2007" name="J. Biol. Chem.">
        <title>Human Xip1 (C2orf13) is a novel regulator of cellular responses to DNA strand breaks.</title>
        <authorList>
            <person name="Bekker-Jensen S."/>
            <person name="Fugger K."/>
            <person name="Danielsen J.R."/>
            <person name="Gromova I."/>
            <person name="Sehested M."/>
            <person name="Celis J."/>
            <person name="Bartek J."/>
            <person name="Lukas J."/>
            <person name="Mailand N."/>
        </authorList>
    </citation>
    <scope>INTERACTION WITH APLF</scope>
</reference>
<reference key="16">
    <citation type="journal article" date="2007" name="Mol. Cell. Biol.">
        <title>APLF (C2orf13) is a novel human protein involved in the cellular response to chromosomal DNA strand breaks.</title>
        <authorList>
            <person name="Iles N."/>
            <person name="Rulten S."/>
            <person name="El-Khamisy S.F."/>
            <person name="Caldecott K.W."/>
        </authorList>
    </citation>
    <scope>INTERACTION WITH APLF</scope>
    <scope>PHOSPHORYLATION</scope>
    <scope>SUBCELLULAR LOCATION</scope>
</reference>
<reference key="17">
    <citation type="journal article" date="2008" name="Proc. Natl. Acad. Sci. U.S.A.">
        <title>A quantitative atlas of mitotic phosphorylation.</title>
        <authorList>
            <person name="Dephoure N."/>
            <person name="Zhou C."/>
            <person name="Villen J."/>
            <person name="Beausoleil S.A."/>
            <person name="Bakalarski C.E."/>
            <person name="Elledge S.J."/>
            <person name="Gygi S.P."/>
        </authorList>
    </citation>
    <scope>PHOSPHORYLATION [LARGE SCALE ANALYSIS] AT SER-226; SER-241; THR-257; SER-259; SER-408; SER-409; SER-410 AND THR-453</scope>
    <scope>IDENTIFICATION BY MASS SPECTROMETRY [LARGE SCALE ANALYSIS]</scope>
    <source>
        <tissue>Cervix carcinoma</tissue>
    </source>
</reference>
<reference key="18">
    <citation type="journal article" date="2009" name="Anal. Chem.">
        <title>Lys-N and trypsin cover complementary parts of the phosphoproteome in a refined SCX-based approach.</title>
        <authorList>
            <person name="Gauci S."/>
            <person name="Helbig A.O."/>
            <person name="Slijper M."/>
            <person name="Krijgsveld J."/>
            <person name="Heck A.J."/>
            <person name="Mohammed S."/>
        </authorList>
    </citation>
    <scope>IDENTIFICATION BY MASS SPECTROMETRY [LARGE SCALE ANALYSIS]</scope>
</reference>
<reference key="19">
    <citation type="journal article" date="2009" name="Nucleic Acids Res.">
        <title>Human DNA polymerase beta polymorphism, Arg137Gln, impairs its polymerase activity and interaction with PCNA and the cellular base excision repair capacity.</title>
        <authorList>
            <person name="Guo Z."/>
            <person name="Zheng L."/>
            <person name="Dai H."/>
            <person name="Zhou M."/>
            <person name="Xu H."/>
            <person name="Shen B."/>
        </authorList>
    </citation>
    <scope>INTERACTION WITH POLB</scope>
</reference>
<reference key="20">
    <citation type="journal article" date="2009" name="Sci. Signal.">
        <title>Quantitative phosphoproteomic analysis of T cell receptor signaling reveals system-wide modulation of protein-protein interactions.</title>
        <authorList>
            <person name="Mayya V."/>
            <person name="Lundgren D.H."/>
            <person name="Hwang S.-I."/>
            <person name="Rezaul K."/>
            <person name="Wu L."/>
            <person name="Eng J.K."/>
            <person name="Rodionov V."/>
            <person name="Han D.K."/>
        </authorList>
    </citation>
    <scope>PHOSPHORYLATION [LARGE SCALE ANALYSIS] AT THR-198; SER-199; SER-226; SER-241; THR-453; SER-461; SER-485 AND THR-488</scope>
    <scope>IDENTIFICATION BY MASS SPECTROMETRY [LARGE SCALE ANALYSIS]</scope>
    <source>
        <tissue>Leukemic T-cell</tissue>
    </source>
</reference>
<reference key="21">
    <citation type="journal article" date="2010" name="Nucleic Acids Res.">
        <title>SIRT1 deacetylates APE1 and regulates cellular base excision repair.</title>
        <authorList>
            <person name="Yamamori T."/>
            <person name="DeRicco J."/>
            <person name="Naqvi A."/>
            <person name="Hoffman T.A."/>
            <person name="Mattagajasingh I."/>
            <person name="Kasuno K."/>
            <person name="Jung S.B."/>
            <person name="Kim C.S."/>
            <person name="Irani K."/>
        </authorList>
    </citation>
    <scope>INTERACTION WITH APEX1</scope>
</reference>
<reference key="22">
    <citation type="journal article" date="2010" name="Sci. Signal.">
        <title>Quantitative phosphoproteomics reveals widespread full phosphorylation site occupancy during mitosis.</title>
        <authorList>
            <person name="Olsen J.V."/>
            <person name="Vermeulen M."/>
            <person name="Santamaria A."/>
            <person name="Kumar C."/>
            <person name="Miller M.L."/>
            <person name="Jensen L.J."/>
            <person name="Gnad F."/>
            <person name="Cox J."/>
            <person name="Jensen T.S."/>
            <person name="Nigg E.A."/>
            <person name="Brunak S."/>
            <person name="Mann M."/>
        </authorList>
    </citation>
    <scope>PHOSPHORYLATION [LARGE SCALE ANALYSIS] AT SER-140; THR-202; SER-204; SER-241 AND THR-257</scope>
    <scope>IDENTIFICATION BY MASS SPECTROMETRY [LARGE SCALE ANALYSIS]</scope>
    <source>
        <tissue>Cervix carcinoma</tissue>
    </source>
</reference>
<reference key="23">
    <citation type="journal article" date="2011" name="Sci. Signal.">
        <title>System-wide temporal characterization of the proteome and phosphoproteome of human embryonic stem cell differentiation.</title>
        <authorList>
            <person name="Rigbolt K.T."/>
            <person name="Prokhorova T.A."/>
            <person name="Akimov V."/>
            <person name="Henningsen J."/>
            <person name="Johansen P.T."/>
            <person name="Kratchmarova I."/>
            <person name="Kassem M."/>
            <person name="Mann M."/>
            <person name="Olsen J.V."/>
            <person name="Blagoev B."/>
        </authorList>
    </citation>
    <scope>PHOSPHORYLATION [LARGE SCALE ANALYSIS] AT SER-241; THR-453 AND THR-457</scope>
    <scope>IDENTIFICATION BY MASS SPECTROMETRY [LARGE SCALE ANALYSIS]</scope>
</reference>
<reference key="24">
    <citation type="journal article" date="2013" name="J. Proteome Res.">
        <title>Toward a comprehensive characterization of a human cancer cell phosphoproteome.</title>
        <authorList>
            <person name="Zhou H."/>
            <person name="Di Palma S."/>
            <person name="Preisinger C."/>
            <person name="Peng M."/>
            <person name="Polat A.N."/>
            <person name="Heck A.J."/>
            <person name="Mohammed S."/>
        </authorList>
    </citation>
    <scope>PHOSPHORYLATION [LARGE SCALE ANALYSIS] AT SER-226; SER-241; SER-266; THR-281; SER-447; THR-453 AND THR-457</scope>
    <scope>IDENTIFICATION BY MASS SPECTROMETRY [LARGE SCALE ANALYSIS]</scope>
    <source>
        <tissue>Cervix carcinoma</tissue>
        <tissue>Erythroleukemia</tissue>
    </source>
</reference>
<reference key="25">
    <citation type="journal article" date="2014" name="J. Proteomics">
        <title>An enzyme assisted RP-RPLC approach for in-depth analysis of human liver phosphoproteome.</title>
        <authorList>
            <person name="Bian Y."/>
            <person name="Song C."/>
            <person name="Cheng K."/>
            <person name="Dong M."/>
            <person name="Wang F."/>
            <person name="Huang J."/>
            <person name="Sun D."/>
            <person name="Wang L."/>
            <person name="Ye M."/>
            <person name="Zou H."/>
        </authorList>
    </citation>
    <scope>PHOSPHORYLATION [LARGE SCALE ANALYSIS] AT SER-446; SER-447; THR-453; THR-457 AND SER-461</scope>
    <scope>IDENTIFICATION BY MASS SPECTROMETRY [LARGE SCALE ANALYSIS]</scope>
    <source>
        <tissue>Liver</tissue>
    </source>
</reference>
<reference key="26">
    <citation type="journal article" date="2014" name="Nat. Struct. Mol. Biol.">
        <title>Uncovering global SUMOylation signaling networks in a site-specific manner.</title>
        <authorList>
            <person name="Hendriks I.A."/>
            <person name="D'Souza R.C."/>
            <person name="Yang B."/>
            <person name="Verlaan-de Vries M."/>
            <person name="Mann M."/>
            <person name="Vertegaal A.C."/>
        </authorList>
    </citation>
    <scope>SUMOYLATION [LARGE SCALE ANALYSIS] AT LYS-176</scope>
    <scope>IDENTIFICATION BY MASS SPECTROMETRY [LARGE SCALE ANALYSIS]</scope>
</reference>
<reference key="27">
    <citation type="journal article" date="2014" name="Proc. Natl. Acad. Sci. U.S.A.">
        <title>Mapping of SUMO sites and analysis of SUMOylation changes induced by external stimuli.</title>
        <authorList>
            <person name="Impens F."/>
            <person name="Radoshevich L."/>
            <person name="Cossart P."/>
            <person name="Ribet D."/>
        </authorList>
    </citation>
    <scope>SUMOYLATION [LARGE SCALE ANALYSIS] AT LYS-176</scope>
    <scope>IDENTIFICATION BY MASS SPECTROMETRY [LARGE SCALE ANALYSIS]</scope>
</reference>
<reference key="28">
    <citation type="journal article" date="2015" name="Cell Rep.">
        <title>SUMO-2 orchestrates chromatin modifiers in response to DNA damage.</title>
        <authorList>
            <person name="Hendriks I.A."/>
            <person name="Treffers L.W."/>
            <person name="Verlaan-de Vries M."/>
            <person name="Olsen J.V."/>
            <person name="Vertegaal A.C."/>
        </authorList>
    </citation>
    <scope>SUMOYLATION [LARGE SCALE ANALYSIS] AT LYS-176</scope>
    <scope>IDENTIFICATION BY MASS SPECTROMETRY [LARGE SCALE ANALYSIS]</scope>
</reference>
<reference key="29">
    <citation type="journal article" date="2017" name="Nat. Struct. Mol. Biol.">
        <title>Site-specific mapping of the human SUMO proteome reveals co-modification with phosphorylation.</title>
        <authorList>
            <person name="Hendriks I.A."/>
            <person name="Lyon D."/>
            <person name="Young C."/>
            <person name="Jensen L.J."/>
            <person name="Vertegaal A.C."/>
            <person name="Nielsen M.L."/>
        </authorList>
    </citation>
    <scope>SUMOYLATION [LARGE SCALE ANALYSIS] AT LYS-176</scope>
    <scope>IDENTIFICATION BY MASS SPECTROMETRY [LARGE SCALE ANALYSIS]</scope>
</reference>
<reference key="30">
    <citation type="journal article" date="2021" name="Mol. Cell">
        <title>XRCC1 prevents toxic PARP1 trapping during DNA base excision repair.</title>
        <authorList>
            <person name="Demin A.A."/>
            <person name="Hirota K."/>
            <person name="Tsuda M."/>
            <person name="Adamowicz M."/>
            <person name="Hailstone R."/>
            <person name="Brazina J."/>
            <person name="Gittens W."/>
            <person name="Kalasova I."/>
            <person name="Shao Z."/>
            <person name="Zha S."/>
            <person name="Sasanuma H."/>
            <person name="Hanzlikova H."/>
            <person name="Takeda S."/>
            <person name="Caldecott K.W."/>
        </authorList>
    </citation>
    <scope>FUNCTION</scope>
</reference>
<reference key="31">
    <citation type="journal article" date="2021" name="Nat. Cell Biol.">
        <title>XRCC1 protects transcription from toxic PARP1 activity during DNA base excision repair.</title>
        <authorList>
            <person name="Adamowicz M."/>
            <person name="Hailstone R."/>
            <person name="Demin A.A."/>
            <person name="Komulainen E."/>
            <person name="Hanzlikova H."/>
            <person name="Brazina J."/>
            <person name="Gautam A."/>
            <person name="Wells S.E."/>
            <person name="Caldecott K.W."/>
        </authorList>
    </citation>
    <scope>FUNCTION</scope>
    <scope>INTERACTION WITH PARP1</scope>
    <scope>MUTAGENESIS OF ARG-335 AND LYS-369</scope>
</reference>
<reference key="32">
    <citation type="submission" date="2006-06" db="PDB data bank">
        <title>Solution structure of the first BRCT domain of DNA-repair protein XRCC1.</title>
        <authorList>
            <consortium name="RIKEN structural genomics initiative (RSGI)"/>
        </authorList>
    </citation>
    <scope>STRUCTURE BY NMR OF 306-422</scope>
</reference>
<reference key="33">
    <citation type="journal article" date="2009" name="Nucleic Acids Res.">
        <title>Specific recognition of a multiply phosphorylated motif in the DNA repair scaffold XRCC1 by the FHA domain of human PNK.</title>
        <authorList>
            <person name="Ali A.A."/>
            <person name="Jukes R.M."/>
            <person name="Pearl L.H."/>
            <person name="Oliver A.W."/>
        </authorList>
    </citation>
    <scope>X-RAY CRYSTALLOGRAPHY (1.85 ANGSTROMS) OF 515-522 IN COMPLEX WITH PNKP</scope>
    <scope>PHOSPHORYLATION AT SER-518; THR-519 AND THR-523</scope>
</reference>
<reference key="34">
    <citation type="journal article" date="1998" name="Cancer Res.">
        <title>Nonconservative amino acid substitution variants exist at polymorphic frequency in DNA repair genes in healthy humans.</title>
        <authorList>
            <person name="Shen M.R."/>
            <person name="Jones I.M."/>
            <person name="Mohrenweiser H."/>
        </authorList>
    </citation>
    <scope>VARIANTS TRP-194; HIS-280 AND ARG-399</scope>
</reference>
<reference key="35">
    <citation type="journal article" date="2000" name="Carcinogenesis">
        <title>Polymorphisms in the DNA repair genes XRCC1 and ERCC2 and biomarkers of DNA damage in human blood mononuclear cells.</title>
        <authorList>
            <person name="Duell E.J."/>
            <person name="Wiencke J.K."/>
            <person name="Cheng T.J."/>
            <person name="Varkonyi A."/>
            <person name="Zuo Z.F."/>
            <person name="Ashok T.D."/>
            <person name="Mark E.J."/>
            <person name="Wain J.C."/>
            <person name="Christiani D.C."/>
            <person name="Kelsey K.T."/>
        </authorList>
    </citation>
    <scope>VARIANT ARG-399</scope>
</reference>
<reference key="36">
    <citation type="journal article" date="2002" name="Cancer Res.">
        <title>The XRCC1 Arg399Gln polymorphism, sunburn, and non-melanoma skin cancer: evidence of gene-environment interaction.</title>
        <authorList>
            <person name="Nelson H.H."/>
            <person name="Kelsey K.T."/>
            <person name="Mott L.A."/>
            <person name="Karagas M.R."/>
        </authorList>
    </citation>
    <scope>VARIANT ARG-399</scope>
</reference>
<reference key="37">
    <citation type="journal article" date="2006" name="Science">
        <title>The consensus coding sequences of human breast and colorectal cancers.</title>
        <authorList>
            <person name="Sjoeblom T."/>
            <person name="Jones S."/>
            <person name="Wood L.D."/>
            <person name="Parsons D.W."/>
            <person name="Lin J."/>
            <person name="Barber T.D."/>
            <person name="Mandelker D."/>
            <person name="Leary R.J."/>
            <person name="Ptak J."/>
            <person name="Silliman N."/>
            <person name="Szabo S."/>
            <person name="Buckhaults P."/>
            <person name="Farrell C."/>
            <person name="Meeh P."/>
            <person name="Markowitz S.D."/>
            <person name="Willis J."/>
            <person name="Dawson D."/>
            <person name="Willson J.K.V."/>
            <person name="Gazdar A.F."/>
            <person name="Hartigan J."/>
            <person name="Wu L."/>
            <person name="Liu C."/>
            <person name="Parmigiani G."/>
            <person name="Park B.H."/>
            <person name="Bachman K.E."/>
            <person name="Papadopoulos N."/>
            <person name="Vogelstein B."/>
            <person name="Kinzler K.W."/>
            <person name="Velculescu V.E."/>
        </authorList>
    </citation>
    <scope>VARIANT [LARGE SCALE ANALYSIS] TRP-350</scope>
</reference>
<reference key="38">
    <citation type="journal article" date="2017" name="Nature">
        <title>XRCC1 mutation is associated with PARP1 hyperactivation and cerebellar ataxia.</title>
        <authorList>
            <consortium name="Care4Rare Canada Consortium"/>
            <person name="Hoch N.C."/>
            <person name="Hanzlikova H."/>
            <person name="Rulten S.L."/>
            <person name="Tetreault M."/>
            <person name="Komulainen E."/>
            <person name="Ju L."/>
            <person name="Hornyak P."/>
            <person name="Zeng Z."/>
            <person name="Gittens W."/>
            <person name="Rey S.A."/>
            <person name="Staras K."/>
            <person name="Mancini G.M."/>
            <person name="McKinnon P.J."/>
            <person name="Wang Z.Q."/>
            <person name="Wagner J.D."/>
            <person name="Yoon G."/>
            <person name="Caldecott K.W."/>
        </authorList>
    </citation>
    <scope>INVOLVEMENT IN SCAR26</scope>
    <scope>VARIANTS SCAR26 ASN-431 AND 465-GLN--ALA-633 DEL</scope>
    <scope>SUBCELLULAR LOCATION</scope>
    <scope>TISSUE SPECIFICITY</scope>
</reference>
<reference key="39">
    <citation type="journal article" date="2011" name="BMC Syst. Biol.">
        <title>Initial characterization of the human central proteome.</title>
        <authorList>
            <person name="Burkard T.R."/>
            <person name="Planyavsky M."/>
            <person name="Kaupe I."/>
            <person name="Breitwieser F.P."/>
            <person name="Buerckstuemmer T."/>
            <person name="Bennett K.L."/>
            <person name="Superti-Furga G."/>
            <person name="Colinge J."/>
        </authorList>
    </citation>
    <scope>IDENTIFICATION BY MASS SPECTROMETRY [LARGE SCALE ANALYSIS]</scope>
</reference>
<gene>
    <name evidence="26 28" type="primary">XRCC1</name>
</gene>
<comment type="function">
    <text evidence="4 6 21 22 23">Scaffold protein involved in DNA single-strand break repair by mediating the assembly of DNA break repair protein complexes (PubMed:11163244, PubMed:28002403). Negatively regulates ADP-ribosyltransferase activity of PARP1 during base-excision repair in order to prevent excessive PARP1 activity (PubMed:28002403, PubMed:34102106, PubMed:34811483). Recognizes and binds poly-ADP-ribose chains: specifically binds auto-poly-ADP-ribosylated PARP1, limiting its activity (PubMed:14500814, PubMed:34102106, PubMed:34811483).</text>
</comment>
<comment type="subunit">
    <text evidence="7 8 11 13 15 16 17 18 19 23">Homodimer (PubMed:16397295). Interacts with polynucleotide kinase (PNK), DNA polymerase-beta (POLB) and DNA ligase III (LIG3) (PubMed:19155274, PubMed:19336415). Interacts with APTX and APLF (PubMed:14755728, PubMed:15044383, PubMed:15380105, PubMed:17353262, PubMed:17507382). Interacts with APEX1; the interaction is induced by SIRT1 and increases with the acetylated form of APEX1 (PubMed:19934257). Interacts with (poly-ADP-ribosylated) PARP1 (PubMed:34811483).</text>
</comment>
<comment type="interaction">
    <interactant intactId="EBI-947466">
        <id>P18887</id>
    </interactant>
    <interactant intactId="EBI-1256044">
        <id>Q8IW19</id>
        <label>APLF</label>
    </interactant>
    <organismsDiffer>false</organismsDiffer>
    <experiments>12</experiments>
</comment>
<comment type="interaction">
    <interactant intactId="EBI-947466">
        <id>P18887</id>
    </interactant>
    <interactant intactId="EBI-847814">
        <id>Q7Z2E3</id>
        <label>APTX</label>
    </interactant>
    <organismsDiffer>false</organismsDiffer>
    <experiments>11</experiments>
</comment>
<comment type="interaction">
    <interactant intactId="EBI-947466">
        <id>P18887</id>
    </interactant>
    <interactant intactId="EBI-1180783">
        <id>O96017</id>
        <label>CHEK2</label>
    </interactant>
    <organismsDiffer>false</organismsDiffer>
    <experiments>8</experiments>
</comment>
<comment type="interaction">
    <interactant intactId="EBI-947466">
        <id>P18887</id>
    </interactant>
    <interactant intactId="EBI-751711">
        <id>P61244</id>
        <label>MAX</label>
    </interactant>
    <organismsDiffer>false</organismsDiffer>
    <experiments>2</experiments>
</comment>
<comment type="interaction">
    <interactant intactId="EBI-947466">
        <id>P18887</id>
    </interactant>
    <interactant intactId="EBI-355676">
        <id>P09874</id>
        <label>PARP1</label>
    </interactant>
    <organismsDiffer>false</organismsDiffer>
    <experiments>7</experiments>
</comment>
<comment type="interaction">
    <interactant intactId="EBI-947466">
        <id>P18887</id>
    </interactant>
    <interactant intactId="EBI-1045072">
        <id>Q96T60</id>
        <label>PNKP</label>
    </interactant>
    <organismsDiffer>false</organismsDiffer>
    <experiments>6</experiments>
</comment>
<comment type="interaction">
    <interactant intactId="EBI-947466">
        <id>P18887</id>
    </interactant>
    <interactant intactId="EBI-713836">
        <id>P06746</id>
        <label>POLB</label>
    </interactant>
    <organismsDiffer>false</organismsDiffer>
    <experiments>5</experiments>
</comment>
<comment type="interaction">
    <interactant intactId="EBI-947466">
        <id>P18887</id>
    </interactant>
    <interactant intactId="EBI-741774">
        <id>Q9UNA4</id>
        <label>POLI</label>
    </interactant>
    <organismsDiffer>false</organismsDiffer>
    <experiments>2</experiments>
</comment>
<comment type="interaction">
    <interactant intactId="EBI-947466">
        <id>P18887</id>
    </interactant>
    <interactant intactId="EBI-2902553">
        <id>Q9NUW8</id>
        <label>TDP1</label>
    </interactant>
    <organismsDiffer>false</organismsDiffer>
    <experiments>3</experiments>
</comment>
<comment type="interaction">
    <interactant intactId="EBI-947466">
        <id>P18887</id>
    </interactant>
    <interactant intactId="EBI-15845002">
        <id>P06766</id>
        <label>Polb</label>
    </interactant>
    <organismsDiffer>true</organismsDiffer>
    <experiments>4</experiments>
</comment>
<comment type="subcellular location">
    <subcellularLocation>
        <location evidence="15 21">Nucleus</location>
    </subcellularLocation>
    <subcellularLocation>
        <location evidence="6">Chromosome</location>
    </subcellularLocation>
    <text evidence="6 21">Moves from the nucleoli to the global nuclear chromatin upon DNA damage (PubMed:28002403). Recruited to DNA damage sites fowwing interaction with poly-ADP-ribose chains (PubMed:14500814).</text>
</comment>
<comment type="tissue specificity">
    <text evidence="21">Expressed in fibroblasts, retinal pigmented epithelial cells and lymphoblastoid cells (at protein level).</text>
</comment>
<comment type="PTM">
    <text evidence="10 11 13 15 17">Phosphorylation of Ser-371 causes dimer dissociation. Phosphorylation by CK2 promotes interaction with APTX and APLF.</text>
</comment>
<comment type="PTM">
    <text evidence="12">Sumoylated.</text>
</comment>
<comment type="polymorphism">
    <text>Carriers of the polymorphic Gln-399 allele may be at greater risk for tobacco- and age-related DNA damage.</text>
</comment>
<comment type="disease" evidence="21">
    <disease id="DI-05068">
        <name>Spinocerebellar ataxia, autosomal recessive, 26</name>
        <acronym>SCAR26</acronym>
        <description>A form of spinocerebellar ataxia, a clinically and genetically heterogeneous group of cerebellar disorders due to degeneration of the cerebellum with variable involvement of the brainstem and spinal cord. SCAR26 is a progressive disease characterized by gait and limb ataxia, loss of independent ambulation, oculomotor apraxia, and peripheral neuropathy with distal muscle weakness and areflexia.</description>
        <dbReference type="MIM" id="617633"/>
    </disease>
    <text>The disease is caused by variants affecting the gene represented in this entry.</text>
</comment>
<proteinExistence type="evidence at protein level"/>
<name>XRCC1_HUMAN</name>
<keyword id="KW-0002">3D-structure</keyword>
<keyword id="KW-0158">Chromosome</keyword>
<keyword id="KW-0227">DNA damage</keyword>
<keyword id="KW-0234">DNA repair</keyword>
<keyword id="KW-1017">Isopeptide bond</keyword>
<keyword id="KW-0523">Neurodegeneration</keyword>
<keyword id="KW-0539">Nucleus</keyword>
<keyword id="KW-0597">Phosphoprotein</keyword>
<keyword id="KW-1267">Proteomics identification</keyword>
<keyword id="KW-1185">Reference proteome</keyword>
<keyword id="KW-0677">Repeat</keyword>
<keyword id="KW-0832">Ubl conjugation</keyword>